<proteinExistence type="evidence at protein level"/>
<sequence length="129" mass="14644">AGPFRFPRCRKEFQQAQHLRACQQWLHKQAMQSGSGPQPQGPQQRPPLLQQCCNELHQEEPLCVCPTLKGASKAVKQQIRQQGQQQGQQGQQLQHEISRIYQTATHLPRVCNIPRVSICPFQKTMPGPS</sequence>
<comment type="function">
    <text>This is a 2S seed storage protein.</text>
</comment>
<comment type="subunit">
    <text>The mature protein consists of a small and a large chain linked by two disulfide bonds.</text>
</comment>
<comment type="allergen">
    <text>Causes an allergic reaction in human.</text>
</comment>
<comment type="similarity">
    <text evidence="2">Belongs to the 2S seed storage albumins family.</text>
</comment>
<dbReference type="PIR" id="S35591">
    <property type="entry name" value="S35591"/>
</dbReference>
<dbReference type="PIR" id="S35592">
    <property type="entry name" value="S35592"/>
</dbReference>
<dbReference type="SMR" id="P80207"/>
<dbReference type="Allergome" id="168">
    <property type="allergen name" value="Bra j 1"/>
</dbReference>
<dbReference type="Allergome" id="3161">
    <property type="allergen name" value="Bra j 1.0101"/>
</dbReference>
<dbReference type="GO" id="GO:0045735">
    <property type="term" value="F:nutrient reservoir activity"/>
    <property type="evidence" value="ECO:0007669"/>
    <property type="project" value="UniProtKB-KW"/>
</dbReference>
<dbReference type="Gene3D" id="1.10.110.10">
    <property type="entry name" value="Plant lipid-transfer and hydrophobic proteins"/>
    <property type="match status" value="1"/>
</dbReference>
<dbReference type="InterPro" id="IPR036312">
    <property type="entry name" value="Bifun_inhib/LTP/seed_sf"/>
</dbReference>
<dbReference type="InterPro" id="IPR016140">
    <property type="entry name" value="Bifunc_inhib/LTP/seed_store"/>
</dbReference>
<dbReference type="InterPro" id="IPR000617">
    <property type="entry name" value="Napin/2SS/CON"/>
</dbReference>
<dbReference type="PANTHER" id="PTHR35496">
    <property type="entry name" value="2S SEED STORAGE PROTEIN 1-RELATED"/>
    <property type="match status" value="1"/>
</dbReference>
<dbReference type="PANTHER" id="PTHR35496:SF20">
    <property type="entry name" value="2S SEED STORAGE PROTEIN 1-RELATED"/>
    <property type="match status" value="1"/>
</dbReference>
<dbReference type="Pfam" id="PF00234">
    <property type="entry name" value="Tryp_alpha_amyl"/>
    <property type="match status" value="1"/>
</dbReference>
<dbReference type="PRINTS" id="PR00496">
    <property type="entry name" value="NAPIN"/>
</dbReference>
<dbReference type="SMART" id="SM00499">
    <property type="entry name" value="AAI"/>
    <property type="match status" value="1"/>
</dbReference>
<dbReference type="SUPFAM" id="SSF47699">
    <property type="entry name" value="Bifunctional inhibitor/lipid-transfer protein/seed storage 2S albumin"/>
    <property type="match status" value="1"/>
</dbReference>
<keyword id="KW-0020">Allergen</keyword>
<keyword id="KW-0903">Direct protein sequencing</keyword>
<keyword id="KW-1015">Disulfide bond</keyword>
<keyword id="KW-0708">Seed storage protein</keyword>
<keyword id="KW-0758">Storage protein</keyword>
<protein>
    <recommendedName>
        <fullName>Allergen Bra j 1-E</fullName>
    </recommendedName>
    <alternativeName>
        <fullName>Allergen Bra j I</fullName>
    </alternativeName>
    <allergenName>Bra j 1-E</allergenName>
    <component>
        <recommendedName>
            <fullName>Allergen Bra j 1-E small chain</fullName>
        </recommendedName>
    </component>
    <component>
        <recommendedName>
            <fullName>Allergen Bra j 1-E large chain</fullName>
        </recommendedName>
    </component>
</protein>
<accession>P80207</accession>
<accession>P80215</accession>
<evidence type="ECO:0000256" key="1">
    <source>
        <dbReference type="SAM" id="MobiDB-lite"/>
    </source>
</evidence>
<evidence type="ECO:0000305" key="2"/>
<feature type="chain" id="PRO_0000032170" description="Allergen Bra j 1-E small chain">
    <location>
        <begin position="1"/>
        <end position="37"/>
    </location>
</feature>
<feature type="chain" id="PRO_0000032171" description="Allergen Bra j 1-E large chain">
    <location>
        <begin position="38"/>
        <end position="129"/>
    </location>
</feature>
<feature type="region of interest" description="Disordered" evidence="1">
    <location>
        <begin position="28"/>
        <end position="47"/>
    </location>
</feature>
<feature type="compositionally biased region" description="Low complexity" evidence="1">
    <location>
        <begin position="32"/>
        <end position="47"/>
    </location>
</feature>
<feature type="sequence variant">
    <original>F</original>
    <variation>I</variation>
    <location>
        <position position="6"/>
    </location>
</feature>
<feature type="sequence variant">
    <original>R</original>
    <variation>K</variation>
    <location>
        <position position="20"/>
    </location>
</feature>
<feature type="non-consecutive residues" evidence="2">
    <location>
        <begin position="37"/>
        <end position="38"/>
    </location>
</feature>
<organism>
    <name type="scientific">Brassica juncea</name>
    <name type="common">Indian mustard</name>
    <name type="synonym">Sinapis juncea</name>
    <dbReference type="NCBI Taxonomy" id="3707"/>
    <lineage>
        <taxon>Eukaryota</taxon>
        <taxon>Viridiplantae</taxon>
        <taxon>Streptophyta</taxon>
        <taxon>Embryophyta</taxon>
        <taxon>Tracheophyta</taxon>
        <taxon>Spermatophyta</taxon>
        <taxon>Magnoliopsida</taxon>
        <taxon>eudicotyledons</taxon>
        <taxon>Gunneridae</taxon>
        <taxon>Pentapetalae</taxon>
        <taxon>rosids</taxon>
        <taxon>malvids</taxon>
        <taxon>Brassicales</taxon>
        <taxon>Brassicaceae</taxon>
        <taxon>Brassiceae</taxon>
        <taxon>Brassica</taxon>
    </lineage>
</organism>
<name>ALL1_BRAJU</name>
<reference key="1">
    <citation type="journal article" date="1993" name="Biochem. J.">
        <title>Characterization of a new oriental-mustard (Brassica juncea) allergen, Bra j IE: detection of an allergenic epitope.</title>
        <authorList>
            <person name="Monsalve R.I."/>
            <person name="Gonzalez de la Pena M.A."/>
            <person name="Menendez-Arias L."/>
            <person name="Lopez-Otin C."/>
            <person name="Villalba M."/>
            <person name="Rodriguez R."/>
        </authorList>
    </citation>
    <scope>PROTEIN SEQUENCE</scope>
    <source>
        <tissue>Seed</tissue>
    </source>
</reference>